<organism>
    <name type="scientific">Homo sapiens</name>
    <name type="common">Human</name>
    <dbReference type="NCBI Taxonomy" id="9606"/>
    <lineage>
        <taxon>Eukaryota</taxon>
        <taxon>Metazoa</taxon>
        <taxon>Chordata</taxon>
        <taxon>Craniata</taxon>
        <taxon>Vertebrata</taxon>
        <taxon>Euteleostomi</taxon>
        <taxon>Mammalia</taxon>
        <taxon>Eutheria</taxon>
        <taxon>Euarchontoglires</taxon>
        <taxon>Primates</taxon>
        <taxon>Haplorrhini</taxon>
        <taxon>Catarrhini</taxon>
        <taxon>Hominidae</taxon>
        <taxon>Homo</taxon>
    </lineage>
</organism>
<protein>
    <recommendedName>
        <fullName>Serpin B5</fullName>
    </recommendedName>
    <alternativeName>
        <fullName>Maspin</fullName>
    </alternativeName>
    <alternativeName>
        <fullName>Peptidase inhibitor 5</fullName>
        <shortName>PI-5</shortName>
    </alternativeName>
</protein>
<feature type="chain" id="PRO_0000032486" description="Serpin B5">
    <location>
        <begin position="1"/>
        <end position="375"/>
    </location>
</feature>
<feature type="site" description="Reactive bond homolog" evidence="1">
    <location>
        <begin position="340"/>
        <end position="341"/>
    </location>
</feature>
<feature type="glycosylation site" description="N-linked (GlcNAc...) asparagine" evidence="2">
    <location>
        <position position="99"/>
    </location>
</feature>
<feature type="glycosylation site" description="N-linked (GlcNAc...) asparagine" evidence="2">
    <location>
        <position position="133"/>
    </location>
</feature>
<feature type="glycosylation site" description="N-linked (GlcNAc...) asparagine" evidence="2">
    <location>
        <position position="188"/>
    </location>
</feature>
<feature type="glycosylation site" description="N-linked (GlcNAc...) asparagine" evidence="2">
    <location>
        <position position="361"/>
    </location>
</feature>
<feature type="splice variant" id="VSP_037145" description="In isoform 2." evidence="8">
    <original>TDTKPVQMMNMEATFCMGNIDSINCKIIELPFQNKHLSMFIL</original>
    <variation>VCGAACSSKRSPIIDVKNDRDRVGHKSIPMRNLRARPAKCLS</variation>
    <location>
        <begin position="190"/>
        <end position="231"/>
    </location>
</feature>
<feature type="splice variant" id="VSP_037146" description="In isoform 2." evidence="8">
    <location>
        <begin position="232"/>
        <end position="375"/>
    </location>
</feature>
<feature type="sequence variant" id="VAR_055223" description="In dbSNP:rs2289519." evidence="3 4 7 10">
    <original>S</original>
    <variation>P</variation>
    <location>
        <position position="176"/>
    </location>
</feature>
<feature type="sequence variant" id="VAR_055224" description="In dbSNP:rs2289520." evidence="7">
    <original>V</original>
    <variation>L</variation>
    <location>
        <position position="187"/>
    </location>
</feature>
<feature type="sequence variant" id="VAR_022115" description="In dbSNP:rs1455555." evidence="6">
    <original>I</original>
    <variation>V</variation>
    <location>
        <position position="319"/>
    </location>
</feature>
<feature type="sequence conflict" description="In Ref. 1; AAA18957." evidence="9" ref="1">
    <original>V</original>
    <variation>I</variation>
    <location>
        <position position="66"/>
    </location>
</feature>
<feature type="sequence conflict" description="In Ref. 5; CAE45703." evidence="9" ref="5">
    <original>K</original>
    <variation>Q</variation>
    <location>
        <position position="245"/>
    </location>
</feature>
<feature type="helix" evidence="11">
    <location>
        <begin position="2"/>
        <end position="22"/>
    </location>
</feature>
<feature type="strand" evidence="12">
    <location>
        <begin position="28"/>
        <end position="30"/>
    </location>
</feature>
<feature type="helix" evidence="11">
    <location>
        <begin position="32"/>
        <end position="45"/>
    </location>
</feature>
<feature type="helix" evidence="11">
    <location>
        <begin position="48"/>
        <end position="57"/>
    </location>
</feature>
<feature type="helix" evidence="12">
    <location>
        <begin position="60"/>
        <end position="62"/>
    </location>
</feature>
<feature type="helix" evidence="11">
    <location>
        <begin position="66"/>
        <end position="80"/>
    </location>
</feature>
<feature type="turn" evidence="11">
    <location>
        <begin position="81"/>
        <end position="83"/>
    </location>
</feature>
<feature type="strand" evidence="11">
    <location>
        <begin position="84"/>
        <end position="95"/>
    </location>
</feature>
<feature type="helix" evidence="11">
    <location>
        <begin position="96"/>
        <end position="98"/>
    </location>
</feature>
<feature type="helix" evidence="11">
    <location>
        <begin position="102"/>
        <end position="108"/>
    </location>
</feature>
<feature type="turn" evidence="11">
    <location>
        <begin position="109"/>
        <end position="115"/>
    </location>
</feature>
<feature type="strand" evidence="11">
    <location>
        <begin position="116"/>
        <end position="119"/>
    </location>
</feature>
<feature type="turn" evidence="11">
    <location>
        <begin position="121"/>
        <end position="123"/>
    </location>
</feature>
<feature type="helix" evidence="11">
    <location>
        <begin position="125"/>
        <end position="139"/>
    </location>
</feature>
<feature type="turn" evidence="11">
    <location>
        <begin position="140"/>
        <end position="142"/>
    </location>
</feature>
<feature type="turn" evidence="11">
    <location>
        <begin position="147"/>
        <end position="150"/>
    </location>
</feature>
<feature type="strand" evidence="11">
    <location>
        <begin position="159"/>
        <end position="168"/>
    </location>
</feature>
<feature type="strand" evidence="11">
    <location>
        <begin position="171"/>
        <end position="173"/>
    </location>
</feature>
<feature type="helix" evidence="11">
    <location>
        <begin position="177"/>
        <end position="179"/>
    </location>
</feature>
<feature type="strand" evidence="11">
    <location>
        <begin position="181"/>
        <end position="190"/>
    </location>
</feature>
<feature type="strand" evidence="11">
    <location>
        <begin position="192"/>
        <end position="209"/>
    </location>
</feature>
<feature type="turn" evidence="11">
    <location>
        <begin position="210"/>
        <end position="213"/>
    </location>
</feature>
<feature type="strand" evidence="11">
    <location>
        <begin position="214"/>
        <end position="221"/>
    </location>
</feature>
<feature type="helix" evidence="11">
    <location>
        <begin position="222"/>
        <end position="224"/>
    </location>
</feature>
<feature type="strand" evidence="11">
    <location>
        <begin position="225"/>
        <end position="235"/>
    </location>
</feature>
<feature type="helix" evidence="11">
    <location>
        <begin position="239"/>
        <end position="249"/>
    </location>
</feature>
<feature type="helix" evidence="11">
    <location>
        <begin position="252"/>
        <end position="258"/>
    </location>
</feature>
<feature type="helix" evidence="11">
    <location>
        <begin position="261"/>
        <end position="263"/>
    </location>
</feature>
<feature type="strand" evidence="11">
    <location>
        <begin position="265"/>
        <end position="274"/>
    </location>
</feature>
<feature type="strand" evidence="11">
    <location>
        <begin position="276"/>
        <end position="282"/>
    </location>
</feature>
<feature type="helix" evidence="11">
    <location>
        <begin position="284"/>
        <end position="291"/>
    </location>
</feature>
<feature type="turn" evidence="13">
    <location>
        <begin position="295"/>
        <end position="297"/>
    </location>
</feature>
<feature type="turn" evidence="11">
    <location>
        <begin position="299"/>
        <end position="301"/>
    </location>
</feature>
<feature type="turn" evidence="11">
    <location>
        <begin position="305"/>
        <end position="307"/>
    </location>
</feature>
<feature type="strand" evidence="11">
    <location>
        <begin position="315"/>
        <end position="326"/>
    </location>
</feature>
<feature type="turn" evidence="12">
    <location>
        <begin position="337"/>
        <end position="341"/>
    </location>
</feature>
<feature type="strand" evidence="11">
    <location>
        <begin position="344"/>
        <end position="349"/>
    </location>
</feature>
<feature type="strand" evidence="11">
    <location>
        <begin position="354"/>
        <end position="360"/>
    </location>
</feature>
<feature type="turn" evidence="11">
    <location>
        <begin position="361"/>
        <end position="364"/>
    </location>
</feature>
<feature type="strand" evidence="11">
    <location>
        <begin position="365"/>
        <end position="372"/>
    </location>
</feature>
<reference key="1">
    <citation type="journal article" date="1994" name="Science">
        <title>Maspin, a serpin with tumor-suppressing activity in human mammary epithelial cells.</title>
        <authorList>
            <person name="Zou Z."/>
            <person name="Anisowicz A."/>
            <person name="Hendrix M.J.C."/>
            <person name="Thor A."/>
            <person name="Neveu M."/>
            <person name="Sheng S."/>
            <person name="Rafidi K."/>
            <person name="Seftor E."/>
            <person name="Sager R."/>
        </authorList>
    </citation>
    <scope>NUCLEOTIDE SEQUENCE [MRNA] (ISOFORM 1)</scope>
    <scope>VARIANTS PRO-176 AND LEU-187</scope>
    <source>
        <tissue>Mammary gland</tissue>
    </source>
</reference>
<reference key="2">
    <citation type="journal article" date="2004" name="Nat. Genet.">
        <title>Complete sequencing and characterization of 21,243 full-length human cDNAs.</title>
        <authorList>
            <person name="Ota T."/>
            <person name="Suzuki Y."/>
            <person name="Nishikawa T."/>
            <person name="Otsuki T."/>
            <person name="Sugiyama T."/>
            <person name="Irie R."/>
            <person name="Wakamatsu A."/>
            <person name="Hayashi K."/>
            <person name="Sato H."/>
            <person name="Nagai K."/>
            <person name="Kimura K."/>
            <person name="Makita H."/>
            <person name="Sekine M."/>
            <person name="Obayashi M."/>
            <person name="Nishi T."/>
            <person name="Shibahara T."/>
            <person name="Tanaka T."/>
            <person name="Ishii S."/>
            <person name="Yamamoto J."/>
            <person name="Saito K."/>
            <person name="Kawai Y."/>
            <person name="Isono Y."/>
            <person name="Nakamura Y."/>
            <person name="Nagahari K."/>
            <person name="Murakami K."/>
            <person name="Yasuda T."/>
            <person name="Iwayanagi T."/>
            <person name="Wagatsuma M."/>
            <person name="Shiratori A."/>
            <person name="Sudo H."/>
            <person name="Hosoiri T."/>
            <person name="Kaku Y."/>
            <person name="Kodaira H."/>
            <person name="Kondo H."/>
            <person name="Sugawara M."/>
            <person name="Takahashi M."/>
            <person name="Kanda K."/>
            <person name="Yokoi T."/>
            <person name="Furuya T."/>
            <person name="Kikkawa E."/>
            <person name="Omura Y."/>
            <person name="Abe K."/>
            <person name="Kamihara K."/>
            <person name="Katsuta N."/>
            <person name="Sato K."/>
            <person name="Tanikawa M."/>
            <person name="Yamazaki M."/>
            <person name="Ninomiya K."/>
            <person name="Ishibashi T."/>
            <person name="Yamashita H."/>
            <person name="Murakawa K."/>
            <person name="Fujimori K."/>
            <person name="Tanai H."/>
            <person name="Kimata M."/>
            <person name="Watanabe M."/>
            <person name="Hiraoka S."/>
            <person name="Chiba Y."/>
            <person name="Ishida S."/>
            <person name="Ono Y."/>
            <person name="Takiguchi S."/>
            <person name="Watanabe S."/>
            <person name="Yosida M."/>
            <person name="Hotuta T."/>
            <person name="Kusano J."/>
            <person name="Kanehori K."/>
            <person name="Takahashi-Fujii A."/>
            <person name="Hara H."/>
            <person name="Tanase T.-O."/>
            <person name="Nomura Y."/>
            <person name="Togiya S."/>
            <person name="Komai F."/>
            <person name="Hara R."/>
            <person name="Takeuchi K."/>
            <person name="Arita M."/>
            <person name="Imose N."/>
            <person name="Musashino K."/>
            <person name="Yuuki H."/>
            <person name="Oshima A."/>
            <person name="Sasaki N."/>
            <person name="Aotsuka S."/>
            <person name="Yoshikawa Y."/>
            <person name="Matsunawa H."/>
            <person name="Ichihara T."/>
            <person name="Shiohata N."/>
            <person name="Sano S."/>
            <person name="Moriya S."/>
            <person name="Momiyama H."/>
            <person name="Satoh N."/>
            <person name="Takami S."/>
            <person name="Terashima Y."/>
            <person name="Suzuki O."/>
            <person name="Nakagawa S."/>
            <person name="Senoh A."/>
            <person name="Mizoguchi H."/>
            <person name="Goto Y."/>
            <person name="Shimizu F."/>
            <person name="Wakebe H."/>
            <person name="Hishigaki H."/>
            <person name="Watanabe T."/>
            <person name="Sugiyama A."/>
            <person name="Takemoto M."/>
            <person name="Kawakami B."/>
            <person name="Yamazaki M."/>
            <person name="Watanabe K."/>
            <person name="Kumagai A."/>
            <person name="Itakura S."/>
            <person name="Fukuzumi Y."/>
            <person name="Fujimori Y."/>
            <person name="Komiyama M."/>
            <person name="Tashiro H."/>
            <person name="Tanigami A."/>
            <person name="Fujiwara T."/>
            <person name="Ono T."/>
            <person name="Yamada K."/>
            <person name="Fujii Y."/>
            <person name="Ozaki K."/>
            <person name="Hirao M."/>
            <person name="Ohmori Y."/>
            <person name="Kawabata A."/>
            <person name="Hikiji T."/>
            <person name="Kobatake N."/>
            <person name="Inagaki H."/>
            <person name="Ikema Y."/>
            <person name="Okamoto S."/>
            <person name="Okitani R."/>
            <person name="Kawakami T."/>
            <person name="Noguchi S."/>
            <person name="Itoh T."/>
            <person name="Shigeta K."/>
            <person name="Senba T."/>
            <person name="Matsumura K."/>
            <person name="Nakajima Y."/>
            <person name="Mizuno T."/>
            <person name="Morinaga M."/>
            <person name="Sasaki M."/>
            <person name="Togashi T."/>
            <person name="Oyama M."/>
            <person name="Hata H."/>
            <person name="Watanabe M."/>
            <person name="Komatsu T."/>
            <person name="Mizushima-Sugano J."/>
            <person name="Satoh T."/>
            <person name="Shirai Y."/>
            <person name="Takahashi Y."/>
            <person name="Nakagawa K."/>
            <person name="Okumura K."/>
            <person name="Nagase T."/>
            <person name="Nomura N."/>
            <person name="Kikuchi H."/>
            <person name="Masuho Y."/>
            <person name="Yamashita R."/>
            <person name="Nakai K."/>
            <person name="Yada T."/>
            <person name="Nakamura Y."/>
            <person name="Ohara O."/>
            <person name="Isogai T."/>
            <person name="Sugano S."/>
        </authorList>
    </citation>
    <scope>NUCLEOTIDE SEQUENCE [LARGE SCALE MRNA] (ISOFORM 1)</scope>
    <scope>VARIANT PRO-176</scope>
    <source>
        <tissue>Esophagus</tissue>
    </source>
</reference>
<reference key="3">
    <citation type="journal article" date="2005" name="Nature">
        <title>DNA sequence and analysis of human chromosome 18.</title>
        <authorList>
            <person name="Nusbaum C."/>
            <person name="Zody M.C."/>
            <person name="Borowsky M.L."/>
            <person name="Kamal M."/>
            <person name="Kodira C.D."/>
            <person name="Taylor T.D."/>
            <person name="Whittaker C.A."/>
            <person name="Chang J.L."/>
            <person name="Cuomo C.A."/>
            <person name="Dewar K."/>
            <person name="FitzGerald M.G."/>
            <person name="Yang X."/>
            <person name="Abouelleil A."/>
            <person name="Allen N.R."/>
            <person name="Anderson S."/>
            <person name="Bloom T."/>
            <person name="Bugalter B."/>
            <person name="Butler J."/>
            <person name="Cook A."/>
            <person name="DeCaprio D."/>
            <person name="Engels R."/>
            <person name="Garber M."/>
            <person name="Gnirke A."/>
            <person name="Hafez N."/>
            <person name="Hall J.L."/>
            <person name="Norman C.H."/>
            <person name="Itoh T."/>
            <person name="Jaffe D.B."/>
            <person name="Kuroki Y."/>
            <person name="Lehoczky J."/>
            <person name="Lui A."/>
            <person name="Macdonald P."/>
            <person name="Mauceli E."/>
            <person name="Mikkelsen T.S."/>
            <person name="Naylor J.W."/>
            <person name="Nicol R."/>
            <person name="Nguyen C."/>
            <person name="Noguchi H."/>
            <person name="O'Leary S.B."/>
            <person name="Piqani B."/>
            <person name="Smith C.L."/>
            <person name="Talamas J.A."/>
            <person name="Topham K."/>
            <person name="Totoki Y."/>
            <person name="Toyoda A."/>
            <person name="Wain H.M."/>
            <person name="Young S.K."/>
            <person name="Zeng Q."/>
            <person name="Zimmer A.R."/>
            <person name="Fujiyama A."/>
            <person name="Hattori M."/>
            <person name="Birren B.W."/>
            <person name="Sakaki Y."/>
            <person name="Lander E.S."/>
        </authorList>
    </citation>
    <scope>NUCLEOTIDE SEQUENCE [LARGE SCALE GENOMIC DNA]</scope>
</reference>
<reference key="4">
    <citation type="journal article" date="2004" name="Genome Res.">
        <title>The status, quality, and expansion of the NIH full-length cDNA project: the Mammalian Gene Collection (MGC).</title>
        <authorList>
            <consortium name="The MGC Project Team"/>
        </authorList>
    </citation>
    <scope>NUCLEOTIDE SEQUENCE [LARGE SCALE MRNA] (ISOFORM 2)</scope>
    <scope>VARIANT PRO-176</scope>
    <source>
        <tissue>Prostate</tissue>
    </source>
</reference>
<reference key="5">
    <citation type="journal article" date="2007" name="BMC Genomics">
        <title>The full-ORF clone resource of the German cDNA consortium.</title>
        <authorList>
            <person name="Bechtel S."/>
            <person name="Rosenfelder H."/>
            <person name="Duda A."/>
            <person name="Schmidt C.P."/>
            <person name="Ernst U."/>
            <person name="Wellenreuther R."/>
            <person name="Mehrle A."/>
            <person name="Schuster C."/>
            <person name="Bahr A."/>
            <person name="Bloecker H."/>
            <person name="Heubner D."/>
            <person name="Hoerlein A."/>
            <person name="Michel G."/>
            <person name="Wedler H."/>
            <person name="Koehrer K."/>
            <person name="Ottenwaelder B."/>
            <person name="Poustka A."/>
            <person name="Wiemann S."/>
            <person name="Schupp I."/>
        </authorList>
    </citation>
    <scope>NUCLEOTIDE SEQUENCE [LARGE SCALE MRNA] OF 245-375 (ISOFORM 1)</scope>
    <scope>VARIANT VAL-319</scope>
    <source>
        <tissue>Small intestine</tissue>
    </source>
</reference>
<reference key="6">
    <citation type="journal article" date="1995" name="J. Biol. Chem.">
        <title>The tumor suppressor maspin does not undergo the stressed to relaxed transition or inhibit trypsin-like serine proteases. Evidence that maspin is not a protease inhibitory serpin.</title>
        <authorList>
            <person name="Pemberton P.A."/>
            <person name="Wong D.T."/>
            <person name="Gibson H.L."/>
            <person name="Kiefer M.C."/>
            <person name="Fitzpatrick P.A."/>
            <person name="Sager R."/>
            <person name="Barr P.J."/>
        </authorList>
    </citation>
    <scope>PROTEIN SEQUENCE OF 341-360</scope>
    <scope>CHARACTERIZATION</scope>
</reference>
<reference key="7">
    <citation type="journal article" date="2005" name="J. Biol. Chem.">
        <title>Mammary serine protease inhibitor (Maspin) binds directly to interferon regulatory factor 6: identification of a novel serpin partnership.</title>
        <authorList>
            <person name="Bailey C.M."/>
            <person name="Khalkhali-Ellis Z."/>
            <person name="Kondo S."/>
            <person name="Margaryan N.V."/>
            <person name="Seftor R.E.B."/>
            <person name="Wheaton W.W."/>
            <person name="Amir S."/>
            <person name="Pins M.R."/>
            <person name="Schutte B.C."/>
            <person name="Hendrix M.J.C."/>
        </authorList>
    </citation>
    <scope>INTERACTION WITH IRF6</scope>
</reference>
<reference key="8">
    <citation type="journal article" date="2013" name="J. Proteome Res.">
        <title>Toward a comprehensive characterization of a human cancer cell phosphoproteome.</title>
        <authorList>
            <person name="Zhou H."/>
            <person name="Di Palma S."/>
            <person name="Preisinger C."/>
            <person name="Peng M."/>
            <person name="Polat A.N."/>
            <person name="Heck A.J."/>
            <person name="Mohammed S."/>
        </authorList>
    </citation>
    <scope>IDENTIFICATION BY MASS SPECTROMETRY [LARGE SCALE ANALYSIS]</scope>
    <source>
        <tissue>Cervix carcinoma</tissue>
    </source>
</reference>
<reference key="9">
    <citation type="journal article" date="2005" name="J. Biol. Chem.">
        <title>The high resolution crystal structure of the human tumor suppressor maspin reveals a novel conformational switch in the G-helix.</title>
        <authorList>
            <person name="Law R.H."/>
            <person name="Irving J.A."/>
            <person name="Buckle A.M."/>
            <person name="Ruzyla K."/>
            <person name="Buzza M."/>
            <person name="Bashtannyk-Puhalovich T.A."/>
            <person name="Beddoe T.C."/>
            <person name="Nguyen K."/>
            <person name="Worrall D.M."/>
            <person name="Bottomley S.P."/>
            <person name="Bird P.I."/>
            <person name="Rossjohn J."/>
            <person name="Whisstock J.C."/>
        </authorList>
    </citation>
    <scope>X-RAY CRYSTALLOGRAPHY (2.1 ANGSTROMS)</scope>
</reference>
<reference key="10">
    <citation type="journal article" date="2011" name="BMC Syst. Biol.">
        <title>Initial characterization of the human central proteome.</title>
        <authorList>
            <person name="Burkard T.R."/>
            <person name="Planyavsky M."/>
            <person name="Kaupe I."/>
            <person name="Breitwieser F.P."/>
            <person name="Buerckstuemmer T."/>
            <person name="Bennett K.L."/>
            <person name="Superti-Furga G."/>
            <person name="Colinge J."/>
        </authorList>
    </citation>
    <scope>VARIANT [LARGE SCALE ANALYSIS] PRO-176</scope>
    <scope>IDENTIFICATION BY MASS SPECTROMETRY [LARGE SCALE ANALYSIS]</scope>
</reference>
<name>SPB5_HUMAN</name>
<comment type="function">
    <text>Tumor suppressor. It blocks the growth, invasion, and metastatic properties of mammary tumors. As it does not undergo the S (stressed) to R (relaxed) conformational transition characteristic of active serpins, it exhibits no serine protease inhibitory activity.</text>
</comment>
<comment type="subunit">
    <text evidence="5">Interacts with IRF6.</text>
</comment>
<comment type="interaction">
    <interactant intactId="EBI-2371394">
        <id>P36952</id>
    </interactant>
    <interactant intactId="EBI-7054564">
        <id>Q9Y6M0</id>
        <label>PRSS21</label>
    </interactant>
    <organismsDiffer>false</organismsDiffer>
    <experiments>7</experiments>
</comment>
<comment type="subcellular location">
    <subcellularLocation>
        <location>Secreted</location>
        <location>Extracellular space</location>
    </subcellularLocation>
</comment>
<comment type="alternative products">
    <event type="alternative splicing"/>
    <isoform>
        <id>P36952-1</id>
        <name>1</name>
        <sequence type="displayed"/>
    </isoform>
    <isoform>
        <id>P36952-2</id>
        <name>2</name>
        <sequence type="described" ref="VSP_037145 VSP_037146"/>
    </isoform>
</comment>
<comment type="tissue specificity">
    <text>Normal mammary epithelial cells.</text>
</comment>
<comment type="similarity">
    <text evidence="9">Belongs to the serpin family. Ov-serpin subfamily.</text>
</comment>
<comment type="online information" name="Atlas of Genetics and Cytogenetics in Oncology and Haematology">
    <link uri="https://atlasgeneticsoncology.org/gene/42267/SerpinB5"/>
</comment>
<accession>P36952</accession>
<accession>B2R6Y4</accession>
<accession>Q6N0B4</accession>
<accession>Q8WW89</accession>
<proteinExistence type="evidence at protein level"/>
<evidence type="ECO:0000250" key="1"/>
<evidence type="ECO:0000255" key="2"/>
<evidence type="ECO:0000269" key="3">
    <source>
    </source>
</evidence>
<evidence type="ECO:0000269" key="4">
    <source>
    </source>
</evidence>
<evidence type="ECO:0000269" key="5">
    <source>
    </source>
</evidence>
<evidence type="ECO:0000269" key="6">
    <source>
    </source>
</evidence>
<evidence type="ECO:0000269" key="7">
    <source>
    </source>
</evidence>
<evidence type="ECO:0000303" key="8">
    <source>
    </source>
</evidence>
<evidence type="ECO:0000305" key="9"/>
<evidence type="ECO:0007744" key="10">
    <source>
    </source>
</evidence>
<evidence type="ECO:0007829" key="11">
    <source>
        <dbReference type="PDB" id="1WZ9"/>
    </source>
</evidence>
<evidence type="ECO:0007829" key="12">
    <source>
        <dbReference type="PDB" id="1XQG"/>
    </source>
</evidence>
<evidence type="ECO:0007829" key="13">
    <source>
        <dbReference type="PDB" id="1XU8"/>
    </source>
</evidence>
<sequence length="375" mass="42100">MDALQLANSAFAVDLFKQLCEKEPLGNVLFSPICLSTSLSLAQVGAKGDTANEIGQVLHFENVKDVPFGFQTVTSDVNKLSSFYSLKLIKRLYVDKSLNLSTEFISSTKRPYAKELETVDFKDKLEETKGQINNSIKDLTDGHFENILADNSVNDQTKILVVNAAYFVGKWMKKFSESETKECPFRVNKTDTKPVQMMNMEATFCMGNIDSINCKIIELPFQNKHLSMFILLPKDVEDESTGLEKIEKQLNSESLSQWTNPSTMANAKVKLSIPKFKVEKMIDPKACLENLGLKHIFSEDTSDFSGMSETKGVALSNVIHKVCLEITEDGGDSIEVPGARILQHKDELNADHPFIYIIRHNKTRNIIFFGKFCSP</sequence>
<keyword id="KW-0002">3D-structure</keyword>
<keyword id="KW-0025">Alternative splicing</keyword>
<keyword id="KW-0903">Direct protein sequencing</keyword>
<keyword id="KW-0325">Glycoprotein</keyword>
<keyword id="KW-1267">Proteomics identification</keyword>
<keyword id="KW-1185">Reference proteome</keyword>
<keyword id="KW-0964">Secreted</keyword>
<gene>
    <name type="primary">SERPINB5</name>
    <name type="synonym">PI5</name>
</gene>
<dbReference type="EMBL" id="U04313">
    <property type="protein sequence ID" value="AAA18957.1"/>
    <property type="molecule type" value="mRNA"/>
</dbReference>
<dbReference type="EMBL" id="AK312765">
    <property type="protein sequence ID" value="BAG35631.1"/>
    <property type="molecule type" value="mRNA"/>
</dbReference>
<dbReference type="EMBL" id="AC036176">
    <property type="status" value="NOT_ANNOTATED_CDS"/>
    <property type="molecule type" value="Genomic_DNA"/>
</dbReference>
<dbReference type="EMBL" id="BC020713">
    <property type="protein sequence ID" value="AAH20713.1"/>
    <property type="molecule type" value="mRNA"/>
</dbReference>
<dbReference type="EMBL" id="BX640597">
    <property type="protein sequence ID" value="CAE45703.1"/>
    <property type="molecule type" value="mRNA"/>
</dbReference>
<dbReference type="CCDS" id="CCDS32839.1">
    <molecule id="P36952-1"/>
</dbReference>
<dbReference type="PIR" id="A36898">
    <property type="entry name" value="A36898"/>
</dbReference>
<dbReference type="RefSeq" id="NP_002630.2">
    <molecule id="P36952-1"/>
    <property type="nucleotide sequence ID" value="NM_002639.5"/>
</dbReference>
<dbReference type="PDB" id="1WZ9">
    <property type="method" value="X-ray"/>
    <property type="resolution" value="2.10 A"/>
    <property type="chains" value="A/B=1-375"/>
</dbReference>
<dbReference type="PDB" id="1XQG">
    <property type="method" value="X-ray"/>
    <property type="resolution" value="3.10 A"/>
    <property type="chains" value="A/B=1-375"/>
</dbReference>
<dbReference type="PDB" id="1XQJ">
    <property type="method" value="X-ray"/>
    <property type="resolution" value="3.10 A"/>
    <property type="chains" value="A=1-375"/>
</dbReference>
<dbReference type="PDB" id="1XU8">
    <property type="method" value="X-ray"/>
    <property type="resolution" value="2.80 A"/>
    <property type="chains" value="A/B=1-375"/>
</dbReference>
<dbReference type="PDBsum" id="1WZ9"/>
<dbReference type="PDBsum" id="1XQG"/>
<dbReference type="PDBsum" id="1XQJ"/>
<dbReference type="PDBsum" id="1XU8"/>
<dbReference type="SMR" id="P36952"/>
<dbReference type="BioGRID" id="111286">
    <property type="interactions" value="167"/>
</dbReference>
<dbReference type="FunCoup" id="P36952">
    <property type="interactions" value="142"/>
</dbReference>
<dbReference type="IntAct" id="P36952">
    <property type="interactions" value="88"/>
</dbReference>
<dbReference type="MINT" id="P36952"/>
<dbReference type="STRING" id="9606.ENSP00000372221"/>
<dbReference type="DrugBank" id="DB04530">
    <property type="generic name" value="S,S-(2-Hydroxyethyl)Thiocysteine"/>
</dbReference>
<dbReference type="MEROPS" id="I04.980"/>
<dbReference type="GlyCosmos" id="P36952">
    <property type="glycosylation" value="4 sites, No reported glycans"/>
</dbReference>
<dbReference type="GlyGen" id="P36952">
    <property type="glycosylation" value="6 sites, 1 O-linked glycan (1 site)"/>
</dbReference>
<dbReference type="iPTMnet" id="P36952"/>
<dbReference type="MetOSite" id="P36952"/>
<dbReference type="PhosphoSitePlus" id="P36952"/>
<dbReference type="SwissPalm" id="P36952"/>
<dbReference type="BioMuta" id="SERPINB5"/>
<dbReference type="DMDM" id="229462757"/>
<dbReference type="CPTAC" id="CPTAC-582"/>
<dbReference type="CPTAC" id="CPTAC-583"/>
<dbReference type="jPOST" id="P36952"/>
<dbReference type="MassIVE" id="P36952"/>
<dbReference type="PaxDb" id="9606-ENSP00000372221"/>
<dbReference type="PeptideAtlas" id="P36952"/>
<dbReference type="PRIDE" id="P36952"/>
<dbReference type="ProteomicsDB" id="55240">
    <molecule id="P36952-1"/>
</dbReference>
<dbReference type="ProteomicsDB" id="55241">
    <molecule id="P36952-2"/>
</dbReference>
<dbReference type="Pumba" id="P36952"/>
<dbReference type="TopDownProteomics" id="P36952-1">
    <molecule id="P36952-1"/>
</dbReference>
<dbReference type="Antibodypedia" id="4036">
    <property type="antibodies" value="624 antibodies from 43 providers"/>
</dbReference>
<dbReference type="DNASU" id="5268"/>
<dbReference type="Ensembl" id="ENST00000382771.9">
    <molecule id="P36952-1"/>
    <property type="protein sequence ID" value="ENSP00000372221.4"/>
    <property type="gene ID" value="ENSG00000206075.14"/>
</dbReference>
<dbReference type="Ensembl" id="ENST00000489441.5">
    <molecule id="P36952-2"/>
    <property type="protein sequence ID" value="ENSP00000467158.1"/>
    <property type="gene ID" value="ENSG00000206075.14"/>
</dbReference>
<dbReference type="GeneID" id="5268"/>
<dbReference type="KEGG" id="hsa:5268"/>
<dbReference type="MANE-Select" id="ENST00000382771.9">
    <property type="protein sequence ID" value="ENSP00000372221.4"/>
    <property type="RefSeq nucleotide sequence ID" value="NM_002639.5"/>
    <property type="RefSeq protein sequence ID" value="NP_002630.2"/>
</dbReference>
<dbReference type="UCSC" id="uc002liy.3">
    <molecule id="P36952-1"/>
    <property type="organism name" value="human"/>
</dbReference>
<dbReference type="AGR" id="HGNC:8949"/>
<dbReference type="CTD" id="5268"/>
<dbReference type="DisGeNET" id="5268"/>
<dbReference type="GeneCards" id="SERPINB5"/>
<dbReference type="HGNC" id="HGNC:8949">
    <property type="gene designation" value="SERPINB5"/>
</dbReference>
<dbReference type="HPA" id="ENSG00000206075">
    <property type="expression patterns" value="Tissue enhanced (esophagus, skin)"/>
</dbReference>
<dbReference type="MIM" id="154790">
    <property type="type" value="gene"/>
</dbReference>
<dbReference type="neXtProt" id="NX_P36952"/>
<dbReference type="OpenTargets" id="ENSG00000206075"/>
<dbReference type="PharmGKB" id="PA35515"/>
<dbReference type="VEuPathDB" id="HostDB:ENSG00000206075"/>
<dbReference type="eggNOG" id="KOG2392">
    <property type="taxonomic scope" value="Eukaryota"/>
</dbReference>
<dbReference type="GeneTree" id="ENSGT00940000160674"/>
<dbReference type="HOGENOM" id="CLU_023330_0_2_1"/>
<dbReference type="InParanoid" id="P36952"/>
<dbReference type="OMA" id="FITNWMK"/>
<dbReference type="OrthoDB" id="671595at2759"/>
<dbReference type="PAN-GO" id="P36952">
    <property type="GO annotations" value="3 GO annotations based on evolutionary models"/>
</dbReference>
<dbReference type="PhylomeDB" id="P36952"/>
<dbReference type="TreeFam" id="TF352619"/>
<dbReference type="PathwayCommons" id="P36952"/>
<dbReference type="SignaLink" id="P36952"/>
<dbReference type="SIGNOR" id="P36952"/>
<dbReference type="BioGRID-ORCS" id="5268">
    <property type="hits" value="8 hits in 1153 CRISPR screens"/>
</dbReference>
<dbReference type="ChiTaRS" id="SERPINB5">
    <property type="organism name" value="human"/>
</dbReference>
<dbReference type="EvolutionaryTrace" id="P36952"/>
<dbReference type="GeneWiki" id="Maspin"/>
<dbReference type="GenomeRNAi" id="5268"/>
<dbReference type="Pharos" id="P36952">
    <property type="development level" value="Tbio"/>
</dbReference>
<dbReference type="PRO" id="PR:P36952"/>
<dbReference type="Proteomes" id="UP000005640">
    <property type="component" value="Chromosome 18"/>
</dbReference>
<dbReference type="RNAct" id="P36952">
    <property type="molecule type" value="protein"/>
</dbReference>
<dbReference type="Bgee" id="ENSG00000206075">
    <property type="expression patterns" value="Expressed in skin of abdomen and 97 other cell types or tissues"/>
</dbReference>
<dbReference type="ExpressionAtlas" id="P36952">
    <property type="expression patterns" value="baseline and differential"/>
</dbReference>
<dbReference type="GO" id="GO:0001533">
    <property type="term" value="C:cornified envelope"/>
    <property type="evidence" value="ECO:0007669"/>
    <property type="project" value="Ensembl"/>
</dbReference>
<dbReference type="GO" id="GO:0005737">
    <property type="term" value="C:cytoplasm"/>
    <property type="evidence" value="ECO:0000314"/>
    <property type="project" value="UniProtKB"/>
</dbReference>
<dbReference type="GO" id="GO:0005615">
    <property type="term" value="C:extracellular space"/>
    <property type="evidence" value="ECO:0000318"/>
    <property type="project" value="GO_Central"/>
</dbReference>
<dbReference type="GO" id="GO:0016528">
    <property type="term" value="C:sarcoplasm"/>
    <property type="evidence" value="ECO:0007669"/>
    <property type="project" value="Ensembl"/>
</dbReference>
<dbReference type="GO" id="GO:0004867">
    <property type="term" value="F:serine-type endopeptidase inhibitor activity"/>
    <property type="evidence" value="ECO:0000318"/>
    <property type="project" value="GO_Central"/>
</dbReference>
<dbReference type="GO" id="GO:0030198">
    <property type="term" value="P:extracellular matrix organization"/>
    <property type="evidence" value="ECO:0007669"/>
    <property type="project" value="Ensembl"/>
</dbReference>
<dbReference type="GO" id="GO:0002009">
    <property type="term" value="P:morphogenesis of an epithelium"/>
    <property type="evidence" value="ECO:0007669"/>
    <property type="project" value="Ensembl"/>
</dbReference>
<dbReference type="GO" id="GO:0060512">
    <property type="term" value="P:prostate gland morphogenesis"/>
    <property type="evidence" value="ECO:0007669"/>
    <property type="project" value="Ensembl"/>
</dbReference>
<dbReference type="GO" id="GO:0050678">
    <property type="term" value="P:regulation of epithelial cell proliferation"/>
    <property type="evidence" value="ECO:0007669"/>
    <property type="project" value="Ensembl"/>
</dbReference>
<dbReference type="CDD" id="cd02057">
    <property type="entry name" value="serpinB5_maspin"/>
    <property type="match status" value="1"/>
</dbReference>
<dbReference type="FunFam" id="3.30.497.10:FF:000009">
    <property type="entry name" value="serpin B5 isoform X2"/>
    <property type="match status" value="1"/>
</dbReference>
<dbReference type="FunFam" id="2.30.39.10:FF:000014">
    <property type="entry name" value="Serpin family B member 9"/>
    <property type="match status" value="1"/>
</dbReference>
<dbReference type="Gene3D" id="2.30.39.10">
    <property type="entry name" value="Alpha-1-antitrypsin, domain 1"/>
    <property type="match status" value="1"/>
</dbReference>
<dbReference type="Gene3D" id="3.30.497.10">
    <property type="entry name" value="Antithrombin, subunit I, domain 2"/>
    <property type="match status" value="1"/>
</dbReference>
<dbReference type="InterPro" id="IPR000240">
    <property type="entry name" value="Serpin_B9/Maspin"/>
</dbReference>
<dbReference type="InterPro" id="IPR023795">
    <property type="entry name" value="Serpin_CS"/>
</dbReference>
<dbReference type="InterPro" id="IPR023796">
    <property type="entry name" value="Serpin_dom"/>
</dbReference>
<dbReference type="InterPro" id="IPR000215">
    <property type="entry name" value="Serpin_fam"/>
</dbReference>
<dbReference type="InterPro" id="IPR036186">
    <property type="entry name" value="Serpin_sf"/>
</dbReference>
<dbReference type="InterPro" id="IPR042178">
    <property type="entry name" value="Serpin_sf_1"/>
</dbReference>
<dbReference type="InterPro" id="IPR042185">
    <property type="entry name" value="Serpin_sf_2"/>
</dbReference>
<dbReference type="InterPro" id="IPR033836">
    <property type="entry name" value="SERPINB5_serpin_dom"/>
</dbReference>
<dbReference type="PANTHER" id="PTHR11461">
    <property type="entry name" value="SERINE PROTEASE INHIBITOR, SERPIN"/>
    <property type="match status" value="1"/>
</dbReference>
<dbReference type="PANTHER" id="PTHR11461:SF55">
    <property type="entry name" value="SERPIN B5"/>
    <property type="match status" value="1"/>
</dbReference>
<dbReference type="Pfam" id="PF00079">
    <property type="entry name" value="Serpin"/>
    <property type="match status" value="1"/>
</dbReference>
<dbReference type="PRINTS" id="PR00676">
    <property type="entry name" value="MASPIN"/>
</dbReference>
<dbReference type="SMART" id="SM00093">
    <property type="entry name" value="SERPIN"/>
    <property type="match status" value="1"/>
</dbReference>
<dbReference type="SUPFAM" id="SSF56574">
    <property type="entry name" value="Serpins"/>
    <property type="match status" value="1"/>
</dbReference>
<dbReference type="PROSITE" id="PS00284">
    <property type="entry name" value="SERPIN"/>
    <property type="match status" value="1"/>
</dbReference>